<comment type="function">
    <text evidence="1">Component of the cleavage factor Im (CFIm) complex that functions as an activator of the pre-mRNA 3'-end cleavage and polyadenylation processing required for the maturation of pre-mRNA into functional mRNAs. CFIm contributes to the recruitment of multiprotein complexes on specific sequences on the pre-mRNA 3'-end, so called cleavage and polyadenylation signals (pA signals). Most pre-mRNAs contain multiple pA signals, resulting in alternative cleavage and polyadenylation (APA) producing mRNAs with variable 3'-end formation. The CFIm complex acts as a key regulator of cleavage and polyadenylation site choice during APA through its binding to 5'-UGUA-3' elements localized in the 3'-untranslated region (UTR) for a huge number of pre-mRNAs. CPSF6 enhances NUDT21/CPSF5 binding to 5'-UGUA-3' elements localized upstream of pA signals and promotes RNA looping, and hence activates directly the mRNA 3'-processing machinery. Plays a role in mRNA export.</text>
</comment>
<comment type="subunit">
    <text evidence="1 5">Component of the cleavage factor Im (CFIm) complex which is a heterotetramer composed of two subunits of NUDT21/CPSF5 and two subunits of CPSF6 or CPSF7 or a heterodimer of CPSF6 and CPSF7. The cleavage factor Im (CFIm) complex associates with the CPSF and CSTF complexes to promote the assembly of the core mRNA 3'-processing machinery. Associates with the exon junction complex (EJC). Associates with the 80S ribosome particle. Interacts (via the RRM domain) with NUDT21/CPSF5; this interaction is direct and enhances binding to RNA. Interacts (via Arg/Ser-rich domain) with FIP1L1 (preferentially via unphosphorylated form and Arg/Glu/Asp-rich domain); this interaction mediates, at least in part, the interaction between the CFIm and CPSF complexes and may be inhibited by CPSF6 hyper-phosphorylation. Interacts (via N-terminus) with NXF1; this interaction is direct. Interacts with SRSF3. Interacts with SRSF7. Interacts with SNRNP70. Interacts with TRA2B/SFRS10. Interacts with UPF1. Interacts with UPF3B. Interacts with VIRMA. Interacts (via Arg/Ser-rich domain) with TNPO3; promoting nuclear import of CPSF6 independently of its phosphorylation status (By similarity). Interacts with YTHDC1 (PubMed:29799838).</text>
</comment>
<comment type="subcellular location">
    <subcellularLocation>
        <location evidence="1">Nucleus</location>
    </subcellularLocation>
    <subcellularLocation>
        <location evidence="1">Nucleus</location>
        <location evidence="1">Nucleoplasm</location>
    </subcellularLocation>
    <subcellularLocation>
        <location evidence="1">Nucleus speckle</location>
    </subcellularLocation>
    <subcellularLocation>
        <location evidence="1">Cytoplasm</location>
    </subcellularLocation>
    <text evidence="1">Shuttles between the nucleus and the cytoplasm in a transcription- and XPO1/CRM1-independent manner, most probably in complex with the cleavage factor Im complex (CFIm). Colocalizes with PSPC1 in punctate subnuclear structures often located adjacent to nuclear speckles, called paraspeckles, and corresponding to interchromatin granules-associated zones (IGAZs). Distribution in speckles and paraspeckles varies during the cell cycle. Associates at sites of active transcription on nascent perichromatin fibrils (PFs) and perichromatin granules. Nuclear import is mediated via interaction with TNPO3 independently of CPSF6 phosphorylation status.</text>
</comment>
<comment type="tissue specificity">
    <text evidence="4">Expressed in testis (PubMed:18032416). Expressed in male germ cells (at protein level) (PubMed:18032416).</text>
</comment>
<comment type="induction">
    <text evidence="4">Up-regulated during spermatogenesis (PubMed:18032416).</text>
</comment>
<comment type="domain">
    <text evidence="1">Contains an Arg/Ser-rich domain composed of arginine-serine dipeptide repeats within the C-terminal region that is necessary and sufficient for activating mRNA 3'-processing and alternative polyadenylation (APA).</text>
</comment>
<comment type="PTM">
    <text evidence="1">Phosphorylated. Phosphorylated in the Arg/Ser-rich domain by SRPK1, in vitro.</text>
</comment>
<comment type="PTM">
    <text evidence="1">Symmetrically dimethylated on arginine residues by PRMT5 in a WDR77- and CLNS1A-dependent manner. Asymmetrically dimethylated on arginine residues by PRMT1.</text>
</comment>
<comment type="PTM">
    <text evidence="1">Symmetrically dimethylated on arginine residues in the GAR motif by PRMT5 in a WDR77- and CLNS1A-dependent manner. Asymmetrically dimethylated on arginine residues in the GAR motif by PRMT1.</text>
</comment>
<comment type="similarity">
    <text evidence="6">Belongs to the RRM CPSF6/7 family.</text>
</comment>
<gene>
    <name evidence="7" type="primary">Cpsf6</name>
</gene>
<dbReference type="EMBL" id="AK046856">
    <property type="protein sequence ID" value="BAC32898.1"/>
    <property type="molecule type" value="mRNA"/>
</dbReference>
<dbReference type="EMBL" id="AK048615">
    <property type="protein sequence ID" value="BAC33392.1"/>
    <property type="molecule type" value="mRNA"/>
</dbReference>
<dbReference type="EMBL" id="AK168764">
    <property type="protein sequence ID" value="BAE40600.1"/>
    <property type="molecule type" value="mRNA"/>
</dbReference>
<dbReference type="EMBL" id="BC068133">
    <property type="protein sequence ID" value="AAH68133.1"/>
    <property type="molecule type" value="mRNA"/>
</dbReference>
<dbReference type="CCDS" id="CCDS24193.1"/>
<dbReference type="RefSeq" id="NP_001013409.1">
    <property type="nucleotide sequence ID" value="NM_001013391.2"/>
</dbReference>
<dbReference type="RefSeq" id="XP_006513921.1">
    <property type="nucleotide sequence ID" value="XM_006513858.3"/>
</dbReference>
<dbReference type="RefSeq" id="XP_030101033.1">
    <property type="nucleotide sequence ID" value="XM_030245173.1"/>
</dbReference>
<dbReference type="SMR" id="Q6NVF9"/>
<dbReference type="BioGRID" id="240650">
    <property type="interactions" value="54"/>
</dbReference>
<dbReference type="DIP" id="DIP-49394N"/>
<dbReference type="FunCoup" id="Q6NVF9">
    <property type="interactions" value="5621"/>
</dbReference>
<dbReference type="IntAct" id="Q6NVF9">
    <property type="interactions" value="5"/>
</dbReference>
<dbReference type="MINT" id="Q6NVF9"/>
<dbReference type="STRING" id="10090.ENSMUSP00000134823"/>
<dbReference type="GlyGen" id="Q6NVF9">
    <property type="glycosylation" value="3 sites, 1 O-linked glycan (2 sites)"/>
</dbReference>
<dbReference type="iPTMnet" id="Q6NVF9"/>
<dbReference type="PhosphoSitePlus" id="Q6NVF9"/>
<dbReference type="jPOST" id="Q6NVF9"/>
<dbReference type="PaxDb" id="10090-ENSMUSP00000068408"/>
<dbReference type="ProteomicsDB" id="278027"/>
<dbReference type="Pumba" id="Q6NVF9"/>
<dbReference type="Antibodypedia" id="29392">
    <property type="antibodies" value="237 antibodies from 29 providers"/>
</dbReference>
<dbReference type="DNASU" id="432508"/>
<dbReference type="Ensembl" id="ENSMUST00000069168.13">
    <property type="protein sequence ID" value="ENSMUSP00000068408.7"/>
    <property type="gene ID" value="ENSMUSG00000055531.13"/>
</dbReference>
<dbReference type="Ensembl" id="ENSMUST00000177145.8">
    <property type="protein sequence ID" value="ENSMUSP00000135136.2"/>
    <property type="gene ID" value="ENSMUSG00000055531.13"/>
</dbReference>
<dbReference type="GeneID" id="432508"/>
<dbReference type="KEGG" id="mmu:432508"/>
<dbReference type="UCSC" id="uc007hdd.2">
    <property type="organism name" value="mouse"/>
</dbReference>
<dbReference type="AGR" id="MGI:1913948"/>
<dbReference type="CTD" id="11052"/>
<dbReference type="MGI" id="MGI:1913948">
    <property type="gene designation" value="Cpsf6"/>
</dbReference>
<dbReference type="VEuPathDB" id="HostDB:ENSMUSG00000055531"/>
<dbReference type="eggNOG" id="KOG4849">
    <property type="taxonomic scope" value="Eukaryota"/>
</dbReference>
<dbReference type="GeneTree" id="ENSGT00730000110905"/>
<dbReference type="InParanoid" id="Q6NVF9"/>
<dbReference type="OMA" id="CTRQNLN"/>
<dbReference type="OrthoDB" id="10065185at2759"/>
<dbReference type="PhylomeDB" id="Q6NVF9"/>
<dbReference type="TreeFam" id="TF316430"/>
<dbReference type="Reactome" id="R-MMU-72187">
    <property type="pathway name" value="mRNA 3'-end processing"/>
</dbReference>
<dbReference type="Reactome" id="R-MMU-72203">
    <property type="pathway name" value="Processing of Capped Intron-Containing Pre-mRNA"/>
</dbReference>
<dbReference type="Reactome" id="R-MMU-73856">
    <property type="pathway name" value="RNA Polymerase II Transcription Termination"/>
</dbReference>
<dbReference type="Reactome" id="R-MMU-77595">
    <property type="pathway name" value="Processing of Intronless Pre-mRNAs"/>
</dbReference>
<dbReference type="BioGRID-ORCS" id="432508">
    <property type="hits" value="23 hits in 79 CRISPR screens"/>
</dbReference>
<dbReference type="ChiTaRS" id="Cpsf6">
    <property type="organism name" value="mouse"/>
</dbReference>
<dbReference type="PRO" id="PR:Q6NVF9"/>
<dbReference type="Proteomes" id="UP000000589">
    <property type="component" value="Chromosome 10"/>
</dbReference>
<dbReference type="RNAct" id="Q6NVF9">
    <property type="molecule type" value="protein"/>
</dbReference>
<dbReference type="Bgee" id="ENSMUSG00000055531">
    <property type="expression patterns" value="Expressed in superior cervical ganglion and 232 other cell types or tissues"/>
</dbReference>
<dbReference type="ExpressionAtlas" id="Q6NVF9">
    <property type="expression patterns" value="baseline and differential"/>
</dbReference>
<dbReference type="GO" id="GO:0005737">
    <property type="term" value="C:cytoplasm"/>
    <property type="evidence" value="ECO:0000250"/>
    <property type="project" value="UniProtKB"/>
</dbReference>
<dbReference type="GO" id="GO:0035061">
    <property type="term" value="C:interchromatin granule"/>
    <property type="evidence" value="ECO:0000250"/>
    <property type="project" value="UniProtKB"/>
</dbReference>
<dbReference type="GO" id="GO:0005849">
    <property type="term" value="C:mRNA cleavage factor complex"/>
    <property type="evidence" value="ECO:0000250"/>
    <property type="project" value="UniProtKB"/>
</dbReference>
<dbReference type="GO" id="GO:0016607">
    <property type="term" value="C:nuclear speck"/>
    <property type="evidence" value="ECO:0000250"/>
    <property type="project" value="UniProtKB"/>
</dbReference>
<dbReference type="GO" id="GO:0005654">
    <property type="term" value="C:nucleoplasm"/>
    <property type="evidence" value="ECO:0000250"/>
    <property type="project" value="UniProtKB"/>
</dbReference>
<dbReference type="GO" id="GO:0005634">
    <property type="term" value="C:nucleus"/>
    <property type="evidence" value="ECO:0000314"/>
    <property type="project" value="UniProtKB"/>
</dbReference>
<dbReference type="GO" id="GO:0042382">
    <property type="term" value="C:paraspeckles"/>
    <property type="evidence" value="ECO:0000250"/>
    <property type="project" value="UniProtKB"/>
</dbReference>
<dbReference type="GO" id="GO:0005726">
    <property type="term" value="C:perichromatin fibrils"/>
    <property type="evidence" value="ECO:0000250"/>
    <property type="project" value="UniProtKB"/>
</dbReference>
<dbReference type="GO" id="GO:1990904">
    <property type="term" value="C:ribonucleoprotein complex"/>
    <property type="evidence" value="ECO:0000266"/>
    <property type="project" value="MGI"/>
</dbReference>
<dbReference type="GO" id="GO:1990448">
    <property type="term" value="F:exon-exon junction complex binding"/>
    <property type="evidence" value="ECO:0000250"/>
    <property type="project" value="UniProtKB"/>
</dbReference>
<dbReference type="GO" id="GO:0003729">
    <property type="term" value="F:mRNA binding"/>
    <property type="evidence" value="ECO:0000250"/>
    <property type="project" value="UniProtKB"/>
</dbReference>
<dbReference type="GO" id="GO:0043023">
    <property type="term" value="F:ribosomal large subunit binding"/>
    <property type="evidence" value="ECO:0000250"/>
    <property type="project" value="UniProtKB"/>
</dbReference>
<dbReference type="GO" id="GO:0180010">
    <property type="term" value="P:co-transcriptional mRNA 3'-end processing, cleavage and polyadenylation pathway"/>
    <property type="evidence" value="ECO:0000250"/>
    <property type="project" value="UniProtKB"/>
</dbReference>
<dbReference type="GO" id="GO:0110104">
    <property type="term" value="P:mRNA alternative polyadenylation"/>
    <property type="evidence" value="ECO:0000250"/>
    <property type="project" value="UniProtKB"/>
</dbReference>
<dbReference type="GO" id="GO:0046833">
    <property type="term" value="P:positive regulation of RNA export from nucleus"/>
    <property type="evidence" value="ECO:0000250"/>
    <property type="project" value="UniProtKB"/>
</dbReference>
<dbReference type="GO" id="GO:0051290">
    <property type="term" value="P:protein heterotetramerization"/>
    <property type="evidence" value="ECO:0000250"/>
    <property type="project" value="UniProtKB"/>
</dbReference>
<dbReference type="CDD" id="cd12643">
    <property type="entry name" value="RRM_CFIm68"/>
    <property type="match status" value="1"/>
</dbReference>
<dbReference type="FunFam" id="3.30.70.330:FF:000081">
    <property type="entry name" value="Cleavage and polyadenylation specificity factor subunit 6"/>
    <property type="match status" value="1"/>
</dbReference>
<dbReference type="Gene3D" id="3.30.70.330">
    <property type="match status" value="1"/>
</dbReference>
<dbReference type="InterPro" id="IPR034772">
    <property type="entry name" value="CPSF6/7"/>
</dbReference>
<dbReference type="InterPro" id="IPR034769">
    <property type="entry name" value="CPSF6_RRM"/>
</dbReference>
<dbReference type="InterPro" id="IPR012677">
    <property type="entry name" value="Nucleotide-bd_a/b_plait_sf"/>
</dbReference>
<dbReference type="InterPro" id="IPR035979">
    <property type="entry name" value="RBD_domain_sf"/>
</dbReference>
<dbReference type="InterPro" id="IPR000504">
    <property type="entry name" value="RRM_dom"/>
</dbReference>
<dbReference type="PANTHER" id="PTHR23204">
    <property type="entry name" value="CLEAVAGE AND POLYADENYLATION SPECIFIC FACTOR"/>
    <property type="match status" value="1"/>
</dbReference>
<dbReference type="Pfam" id="PF00076">
    <property type="entry name" value="RRM_1"/>
    <property type="match status" value="1"/>
</dbReference>
<dbReference type="SMART" id="SM00360">
    <property type="entry name" value="RRM"/>
    <property type="match status" value="1"/>
</dbReference>
<dbReference type="SUPFAM" id="SSF54928">
    <property type="entry name" value="RNA-binding domain, RBD"/>
    <property type="match status" value="1"/>
</dbReference>
<dbReference type="PROSITE" id="PS50102">
    <property type="entry name" value="RRM"/>
    <property type="match status" value="1"/>
</dbReference>
<evidence type="ECO:0000250" key="1">
    <source>
        <dbReference type="UniProtKB" id="Q16630"/>
    </source>
</evidence>
<evidence type="ECO:0000255" key="2">
    <source>
        <dbReference type="PROSITE-ProRule" id="PRU00176"/>
    </source>
</evidence>
<evidence type="ECO:0000256" key="3">
    <source>
        <dbReference type="SAM" id="MobiDB-lite"/>
    </source>
</evidence>
<evidence type="ECO:0000269" key="4">
    <source>
    </source>
</evidence>
<evidence type="ECO:0000269" key="5">
    <source>
    </source>
</evidence>
<evidence type="ECO:0000305" key="6"/>
<evidence type="ECO:0000312" key="7">
    <source>
        <dbReference type="MGI" id="MGI:1913948"/>
    </source>
</evidence>
<name>CPSF6_MOUSE</name>
<proteinExistence type="evidence at protein level"/>
<sequence length="551" mass="59153">MADGVDHIDIYADVGEEFNQEAEYGGHDQIDLYDDVISPSANNGDAPEDRDYMDTLPPTVGDDVGKGAAPNVVYTYTGKRIALYIGNLTWWTTDEDLTEAVHSLGVNDILEIKFFENRANGQSKGFALVGVGSEASSKKLMDLLPKRELHGQSPVVTPCNKQFLSQFEMQSRKTTQSGQMSGEGKAGPPGGGSRAAFPQGGRGRGRFPGAVPGGDRFPGPAGPGGPPPPFPAGQTPPRPPLGPPGPPGPPGPPPPGQVLPPPLAGPPNRGDRPPPPVLFPGQPFGQPPLGPLPPGPPPPVPGYGPPPGPPPPQQGPPPPPGPFPPRPPGPLGPPLTLAPPPHLPGPPPGAPPPAPHVNPAFFPPPTNSGMPTSDSRGPPPTDPYGRPPPYDRGDYGPPGREMDTARTPLSEAEFEEIMNRNRAISSSAISRAVSDASAGDYGSAIETLVTAISLIKQSKVSADDRCKVLISSLQDCLHGIESKSYGSGSRRERSRERDHSRSREKSRRHKSRSRDRHDDYYRERSRERERHRDRDRDRDRERDREREYRHR</sequence>
<organism>
    <name type="scientific">Mus musculus</name>
    <name type="common">Mouse</name>
    <dbReference type="NCBI Taxonomy" id="10090"/>
    <lineage>
        <taxon>Eukaryota</taxon>
        <taxon>Metazoa</taxon>
        <taxon>Chordata</taxon>
        <taxon>Craniata</taxon>
        <taxon>Vertebrata</taxon>
        <taxon>Euteleostomi</taxon>
        <taxon>Mammalia</taxon>
        <taxon>Eutheria</taxon>
        <taxon>Euarchontoglires</taxon>
        <taxon>Glires</taxon>
        <taxon>Rodentia</taxon>
        <taxon>Myomorpha</taxon>
        <taxon>Muroidea</taxon>
        <taxon>Muridae</taxon>
        <taxon>Murinae</taxon>
        <taxon>Mus</taxon>
        <taxon>Mus</taxon>
    </lineage>
</organism>
<accession>Q6NVF9</accession>
<accession>Q8BX86</accession>
<accession>Q8BXI8</accession>
<keyword id="KW-0963">Cytoplasm</keyword>
<keyword id="KW-0488">Methylation</keyword>
<keyword id="KW-0507">mRNA processing</keyword>
<keyword id="KW-0539">Nucleus</keyword>
<keyword id="KW-0597">Phosphoprotein</keyword>
<keyword id="KW-1185">Reference proteome</keyword>
<keyword id="KW-0694">RNA-binding</keyword>
<reference key="1">
    <citation type="journal article" date="2005" name="Science">
        <title>The transcriptional landscape of the mammalian genome.</title>
        <authorList>
            <person name="Carninci P."/>
            <person name="Kasukawa T."/>
            <person name="Katayama S."/>
            <person name="Gough J."/>
            <person name="Frith M.C."/>
            <person name="Maeda N."/>
            <person name="Oyama R."/>
            <person name="Ravasi T."/>
            <person name="Lenhard B."/>
            <person name="Wells C."/>
            <person name="Kodzius R."/>
            <person name="Shimokawa K."/>
            <person name="Bajic V.B."/>
            <person name="Brenner S.E."/>
            <person name="Batalov S."/>
            <person name="Forrest A.R."/>
            <person name="Zavolan M."/>
            <person name="Davis M.J."/>
            <person name="Wilming L.G."/>
            <person name="Aidinis V."/>
            <person name="Allen J.E."/>
            <person name="Ambesi-Impiombato A."/>
            <person name="Apweiler R."/>
            <person name="Aturaliya R.N."/>
            <person name="Bailey T.L."/>
            <person name="Bansal M."/>
            <person name="Baxter L."/>
            <person name="Beisel K.W."/>
            <person name="Bersano T."/>
            <person name="Bono H."/>
            <person name="Chalk A.M."/>
            <person name="Chiu K.P."/>
            <person name="Choudhary V."/>
            <person name="Christoffels A."/>
            <person name="Clutterbuck D.R."/>
            <person name="Crowe M.L."/>
            <person name="Dalla E."/>
            <person name="Dalrymple B.P."/>
            <person name="de Bono B."/>
            <person name="Della Gatta G."/>
            <person name="di Bernardo D."/>
            <person name="Down T."/>
            <person name="Engstrom P."/>
            <person name="Fagiolini M."/>
            <person name="Faulkner G."/>
            <person name="Fletcher C.F."/>
            <person name="Fukushima T."/>
            <person name="Furuno M."/>
            <person name="Futaki S."/>
            <person name="Gariboldi M."/>
            <person name="Georgii-Hemming P."/>
            <person name="Gingeras T.R."/>
            <person name="Gojobori T."/>
            <person name="Green R.E."/>
            <person name="Gustincich S."/>
            <person name="Harbers M."/>
            <person name="Hayashi Y."/>
            <person name="Hensch T.K."/>
            <person name="Hirokawa N."/>
            <person name="Hill D."/>
            <person name="Huminiecki L."/>
            <person name="Iacono M."/>
            <person name="Ikeo K."/>
            <person name="Iwama A."/>
            <person name="Ishikawa T."/>
            <person name="Jakt M."/>
            <person name="Kanapin A."/>
            <person name="Katoh M."/>
            <person name="Kawasawa Y."/>
            <person name="Kelso J."/>
            <person name="Kitamura H."/>
            <person name="Kitano H."/>
            <person name="Kollias G."/>
            <person name="Krishnan S.P."/>
            <person name="Kruger A."/>
            <person name="Kummerfeld S.K."/>
            <person name="Kurochkin I.V."/>
            <person name="Lareau L.F."/>
            <person name="Lazarevic D."/>
            <person name="Lipovich L."/>
            <person name="Liu J."/>
            <person name="Liuni S."/>
            <person name="McWilliam S."/>
            <person name="Madan Babu M."/>
            <person name="Madera M."/>
            <person name="Marchionni L."/>
            <person name="Matsuda H."/>
            <person name="Matsuzawa S."/>
            <person name="Miki H."/>
            <person name="Mignone F."/>
            <person name="Miyake S."/>
            <person name="Morris K."/>
            <person name="Mottagui-Tabar S."/>
            <person name="Mulder N."/>
            <person name="Nakano N."/>
            <person name="Nakauchi H."/>
            <person name="Ng P."/>
            <person name="Nilsson R."/>
            <person name="Nishiguchi S."/>
            <person name="Nishikawa S."/>
            <person name="Nori F."/>
            <person name="Ohara O."/>
            <person name="Okazaki Y."/>
            <person name="Orlando V."/>
            <person name="Pang K.C."/>
            <person name="Pavan W.J."/>
            <person name="Pavesi G."/>
            <person name="Pesole G."/>
            <person name="Petrovsky N."/>
            <person name="Piazza S."/>
            <person name="Reed J."/>
            <person name="Reid J.F."/>
            <person name="Ring B.Z."/>
            <person name="Ringwald M."/>
            <person name="Rost B."/>
            <person name="Ruan Y."/>
            <person name="Salzberg S.L."/>
            <person name="Sandelin A."/>
            <person name="Schneider C."/>
            <person name="Schoenbach C."/>
            <person name="Sekiguchi K."/>
            <person name="Semple C.A."/>
            <person name="Seno S."/>
            <person name="Sessa L."/>
            <person name="Sheng Y."/>
            <person name="Shibata Y."/>
            <person name="Shimada H."/>
            <person name="Shimada K."/>
            <person name="Silva D."/>
            <person name="Sinclair B."/>
            <person name="Sperling S."/>
            <person name="Stupka E."/>
            <person name="Sugiura K."/>
            <person name="Sultana R."/>
            <person name="Takenaka Y."/>
            <person name="Taki K."/>
            <person name="Tammoja K."/>
            <person name="Tan S.L."/>
            <person name="Tang S."/>
            <person name="Taylor M.S."/>
            <person name="Tegner J."/>
            <person name="Teichmann S.A."/>
            <person name="Ueda H.R."/>
            <person name="van Nimwegen E."/>
            <person name="Verardo R."/>
            <person name="Wei C.L."/>
            <person name="Yagi K."/>
            <person name="Yamanishi H."/>
            <person name="Zabarovsky E."/>
            <person name="Zhu S."/>
            <person name="Zimmer A."/>
            <person name="Hide W."/>
            <person name="Bult C."/>
            <person name="Grimmond S.M."/>
            <person name="Teasdale R.D."/>
            <person name="Liu E.T."/>
            <person name="Brusic V."/>
            <person name="Quackenbush J."/>
            <person name="Wahlestedt C."/>
            <person name="Mattick J.S."/>
            <person name="Hume D.A."/>
            <person name="Kai C."/>
            <person name="Sasaki D."/>
            <person name="Tomaru Y."/>
            <person name="Fukuda S."/>
            <person name="Kanamori-Katayama M."/>
            <person name="Suzuki M."/>
            <person name="Aoki J."/>
            <person name="Arakawa T."/>
            <person name="Iida J."/>
            <person name="Imamura K."/>
            <person name="Itoh M."/>
            <person name="Kato T."/>
            <person name="Kawaji H."/>
            <person name="Kawagashira N."/>
            <person name="Kawashima T."/>
            <person name="Kojima M."/>
            <person name="Kondo S."/>
            <person name="Konno H."/>
            <person name="Nakano K."/>
            <person name="Ninomiya N."/>
            <person name="Nishio T."/>
            <person name="Okada M."/>
            <person name="Plessy C."/>
            <person name="Shibata K."/>
            <person name="Shiraki T."/>
            <person name="Suzuki S."/>
            <person name="Tagami M."/>
            <person name="Waki K."/>
            <person name="Watahiki A."/>
            <person name="Okamura-Oho Y."/>
            <person name="Suzuki H."/>
            <person name="Kawai J."/>
            <person name="Hayashizaki Y."/>
        </authorList>
    </citation>
    <scope>NUCLEOTIDE SEQUENCE [LARGE SCALE MRNA]</scope>
    <source>
        <strain>C57BL/6J</strain>
        <tissue>Head</tissue>
        <tissue>Kidney</tissue>
        <tissue>Medulla oblongata</tissue>
    </source>
</reference>
<reference key="2">
    <citation type="journal article" date="2004" name="Genome Res.">
        <title>The status, quality, and expansion of the NIH full-length cDNA project: the Mammalian Gene Collection (MGC).</title>
        <authorList>
            <consortium name="The MGC Project Team"/>
        </authorList>
    </citation>
    <scope>NUCLEOTIDE SEQUENCE [LARGE SCALE MRNA]</scope>
    <source>
        <strain>C57BL/6J</strain>
        <tissue>Brain</tissue>
    </source>
</reference>
<reference key="3">
    <citation type="journal article" date="2008" name="Biol. Reprod.">
        <title>Pre-messenger RNA cleavage factor I (CFIm): potential role in alternative polyadenylation during spermatogenesis.</title>
        <authorList>
            <person name="Sartini B.L."/>
            <person name="Wang H."/>
            <person name="Wang W."/>
            <person name="Millette C.F."/>
            <person name="Kilpatrick D.L."/>
        </authorList>
    </citation>
    <scope>SUBCELLULAR LOCATION</scope>
    <scope>TISSUE SPECIFICITY</scope>
    <scope>INDUCTION</scope>
</reference>
<reference key="4">
    <citation type="journal article" date="2010" name="Cell">
        <title>A tissue-specific atlas of mouse protein phosphorylation and expression.</title>
        <authorList>
            <person name="Huttlin E.L."/>
            <person name="Jedrychowski M.P."/>
            <person name="Elias J.E."/>
            <person name="Goswami T."/>
            <person name="Rad R."/>
            <person name="Beausoleil S.A."/>
            <person name="Villen J."/>
            <person name="Haas W."/>
            <person name="Sowa M.E."/>
            <person name="Gygi S.P."/>
        </authorList>
    </citation>
    <scope>IDENTIFICATION BY MASS SPECTROMETRY [LARGE SCALE ANALYSIS]</scope>
    <source>
        <tissue>Brain</tissue>
        <tissue>Kidney</tissue>
        <tissue>Liver</tissue>
        <tissue>Lung</tissue>
        <tissue>Spleen</tissue>
    </source>
</reference>
<reference key="5">
    <citation type="journal article" date="2018" name="PLoS Genet.">
        <title>Nuclear m6A reader YTHDC1 regulates alternative polyadenylation and splicing during mouse oocyte development.</title>
        <authorList>
            <person name="Kasowitz S.D."/>
            <person name="Ma J."/>
            <person name="Anderson S.J."/>
            <person name="Leu N.A."/>
            <person name="Xu Y."/>
            <person name="Gregory B.D."/>
            <person name="Schultz R.M."/>
            <person name="Wang P.J."/>
        </authorList>
    </citation>
    <scope>INTERACTION WITH YTHDC1</scope>
</reference>
<protein>
    <recommendedName>
        <fullName evidence="1">Cleavage and polyadenylation specificity factor subunit 6</fullName>
    </recommendedName>
</protein>
<feature type="chain" id="PRO_0000081522" description="Cleavage and polyadenylation specificity factor subunit 6">
    <location>
        <begin position="1"/>
        <end position="551"/>
    </location>
</feature>
<feature type="domain" description="RRM" evidence="2">
    <location>
        <begin position="81"/>
        <end position="161"/>
    </location>
</feature>
<feature type="region of interest" description="Necessary for interaction with NXF1" evidence="1">
    <location>
        <begin position="1"/>
        <end position="213"/>
    </location>
</feature>
<feature type="region of interest" description="Necessary for interaction with NUDT21/CPSF5" evidence="1">
    <location>
        <begin position="81"/>
        <end position="161"/>
    </location>
</feature>
<feature type="region of interest" description="Necessary for nuclear paraspeckles localization" evidence="1">
    <location>
        <begin position="81"/>
        <end position="161"/>
    </location>
</feature>
<feature type="region of interest" description="Disordered" evidence="3">
    <location>
        <begin position="169"/>
        <end position="411"/>
    </location>
</feature>
<feature type="region of interest" description="Sufficient for nuclear speckle localization" evidence="1">
    <location>
        <begin position="404"/>
        <end position="551"/>
    </location>
</feature>
<feature type="region of interest" description="Necessary for RNA-binding" evidence="1">
    <location>
        <begin position="405"/>
        <end position="551"/>
    </location>
</feature>
<feature type="region of interest" description="Disordered" evidence="3">
    <location>
        <begin position="477"/>
        <end position="551"/>
    </location>
</feature>
<feature type="region of interest" description="Necessary for interaction with SRSF3, SRSF7 and TRA2B/SFRS10" evidence="1">
    <location>
        <begin position="481"/>
        <end position="551"/>
    </location>
</feature>
<feature type="region of interest" description="Arg/Ser-rich domain" evidence="1">
    <location>
        <begin position="490"/>
        <end position="551"/>
    </location>
</feature>
<feature type="region of interest" description="Sufficient for nuclear targeting" evidence="1">
    <location>
        <begin position="510"/>
        <end position="551"/>
    </location>
</feature>
<feature type="short sequence motif" description="GAR" evidence="1">
    <location>
        <begin position="202"/>
        <end position="206"/>
    </location>
</feature>
<feature type="compositionally biased region" description="Polar residues" evidence="3">
    <location>
        <begin position="169"/>
        <end position="180"/>
    </location>
</feature>
<feature type="compositionally biased region" description="Gly residues" evidence="3">
    <location>
        <begin position="184"/>
        <end position="193"/>
    </location>
</feature>
<feature type="compositionally biased region" description="Low complexity" evidence="3">
    <location>
        <begin position="207"/>
        <end position="219"/>
    </location>
</feature>
<feature type="compositionally biased region" description="Pro residues" evidence="3">
    <location>
        <begin position="220"/>
        <end position="265"/>
    </location>
</feature>
<feature type="compositionally biased region" description="Pro residues" evidence="3">
    <location>
        <begin position="285"/>
        <end position="366"/>
    </location>
</feature>
<feature type="compositionally biased region" description="Pro residues" evidence="3">
    <location>
        <begin position="377"/>
        <end position="388"/>
    </location>
</feature>
<feature type="compositionally biased region" description="Basic and acidic residues" evidence="3">
    <location>
        <begin position="389"/>
        <end position="404"/>
    </location>
</feature>
<feature type="compositionally biased region" description="Basic and acidic residues" evidence="3">
    <location>
        <begin position="489"/>
        <end position="503"/>
    </location>
</feature>
<feature type="compositionally biased region" description="Basic residues" evidence="3">
    <location>
        <begin position="504"/>
        <end position="514"/>
    </location>
</feature>
<feature type="compositionally biased region" description="Basic and acidic residues" evidence="3">
    <location>
        <begin position="515"/>
        <end position="551"/>
    </location>
</feature>
<feature type="modified residue" description="Phosphothreonine" evidence="1">
    <location>
        <position position="157"/>
    </location>
</feature>
<feature type="modified residue" description="Phosphothreonine" evidence="1">
    <location>
        <position position="404"/>
    </location>
</feature>
<feature type="modified residue" description="Phosphothreonine" evidence="1">
    <location>
        <position position="407"/>
    </location>
</feature>
<feature type="modified residue" description="Phosphoserine" evidence="1">
    <location>
        <position position="494"/>
    </location>
</feature>
<feature type="modified residue" description="Phosphoserine" evidence="1">
    <location>
        <position position="500"/>
    </location>
</feature>
<feature type="modified residue" description="Phosphoserine" evidence="1">
    <location>
        <position position="511"/>
    </location>
</feature>
<feature type="modified residue" description="Phosphoserine" evidence="1">
    <location>
        <position position="513"/>
    </location>
</feature>
<feature type="modified residue" description="Phosphoserine" evidence="1">
    <location>
        <position position="525"/>
    </location>
</feature>
<feature type="sequence conflict" description="In Ref. 1; BAC32898." evidence="6" ref="1">
    <original>E</original>
    <variation>K</variation>
    <location>
        <position position="95"/>
    </location>
</feature>
<feature type="sequence conflict" description="In Ref. 1; BAC32898." evidence="6" ref="1">
    <original>P</original>
    <variation>L</variation>
    <location>
        <position position="266"/>
    </location>
</feature>
<feature type="sequence conflict" description="In Ref. 1; BAC33392." evidence="6" ref="1">
    <original>L</original>
    <variation>V</variation>
    <location>
        <position position="289"/>
    </location>
</feature>